<sequence>MVKYFLGQSVLRSSWDQVFAAFWQRYPNPYSKHVLTEDIVHREVTPDQKLLSRRLLTKTNRMPRWAERLFPANVAHSVYVLEDSIVDPQNQTMTTFTWNINHARLMVVEERCVYCVNSDNSGWTEIRREAWVSSSLFGVSRAVQEFGLARFKSNVTKTMKGFEYILAKLQGEAPSKTLVETAKEAKEKAKETALAATEKAKDLASKAATKKQQQQQQFV</sequence>
<evidence type="ECO:0000255" key="1">
    <source>
        <dbReference type="PROSITE-ProRule" id="PRU00158"/>
    </source>
</evidence>
<evidence type="ECO:0000269" key="2">
    <source>
    </source>
</evidence>
<evidence type="ECO:0000269" key="3">
    <source>
    </source>
</evidence>
<evidence type="ECO:0000269" key="4">
    <source>
    </source>
</evidence>
<evidence type="ECO:0000269" key="5">
    <source>
    </source>
</evidence>
<evidence type="ECO:0000303" key="6">
    <source>
    </source>
</evidence>
<evidence type="ECO:0000305" key="7"/>
<evidence type="ECO:0007829" key="8">
    <source>
        <dbReference type="PDB" id="6I3V"/>
    </source>
</evidence>
<evidence type="ECO:0007829" key="9">
    <source>
        <dbReference type="PDB" id="6I3Y"/>
    </source>
</evidence>
<keyword id="KW-0002">3D-structure</keyword>
<keyword id="KW-0025">Alternative splicing</keyword>
<keyword id="KW-0053">Apoptosis</keyword>
<keyword id="KW-0445">Lipid transport</keyword>
<keyword id="KW-0496">Mitochondrion</keyword>
<keyword id="KW-1267">Proteomics identification</keyword>
<keyword id="KW-1185">Reference proteome</keyword>
<keyword id="KW-0809">Transit peptide</keyword>
<keyword id="KW-0813">Transport</keyword>
<name>PRLD1_HUMAN</name>
<feature type="transit peptide" description="Mitochondrion" evidence="2">
    <location>
        <begin position="1"/>
        <end status="unknown"/>
    </location>
</feature>
<feature type="chain" id="PRO_0000097119" description="PRELI domain-containing protein 1, mitochondrial">
    <location>
        <begin status="unknown"/>
        <end position="219"/>
    </location>
</feature>
<feature type="domain" description="PRELI/MSF1" evidence="1">
    <location>
        <begin position="36"/>
        <end position="174"/>
    </location>
</feature>
<feature type="splice variant" id="VSP_054731" description="In isoform 2." evidence="6">
    <location>
        <begin position="171"/>
        <end position="181"/>
    </location>
</feature>
<feature type="sequence conflict" description="In Ref. 1; AAF09255." evidence="7" ref="1">
    <original>R</original>
    <variation>H</variation>
    <location>
        <position position="127"/>
    </location>
</feature>
<feature type="sequence conflict" description="In Ref. 6; AAF17191." evidence="7" ref="6">
    <original>A</original>
    <variation>T</variation>
    <location>
        <position position="142"/>
    </location>
</feature>
<feature type="strand" evidence="8">
    <location>
        <begin position="1"/>
        <end position="13"/>
    </location>
</feature>
<feature type="helix" evidence="8">
    <location>
        <begin position="15"/>
        <end position="24"/>
    </location>
</feature>
<feature type="strand" evidence="8">
    <location>
        <begin position="34"/>
        <end position="44"/>
    </location>
</feature>
<feature type="strand" evidence="8">
    <location>
        <begin position="50"/>
        <end position="58"/>
    </location>
</feature>
<feature type="helix" evidence="8">
    <location>
        <begin position="64"/>
        <end position="69"/>
    </location>
</feature>
<feature type="helix" evidence="8">
    <location>
        <begin position="71"/>
        <end position="73"/>
    </location>
</feature>
<feature type="strand" evidence="9">
    <location>
        <begin position="74"/>
        <end position="76"/>
    </location>
</feature>
<feature type="strand" evidence="8">
    <location>
        <begin position="78"/>
        <end position="87"/>
    </location>
</feature>
<feature type="helix" evidence="8">
    <location>
        <begin position="88"/>
        <end position="90"/>
    </location>
</feature>
<feature type="strand" evidence="8">
    <location>
        <begin position="92"/>
        <end position="102"/>
    </location>
</feature>
<feature type="turn" evidence="8">
    <location>
        <begin position="103"/>
        <end position="105"/>
    </location>
</feature>
<feature type="strand" evidence="8">
    <location>
        <begin position="107"/>
        <end position="116"/>
    </location>
</feature>
<feature type="strand" evidence="8">
    <location>
        <begin position="124"/>
        <end position="133"/>
    </location>
</feature>
<feature type="helix" evidence="8">
    <location>
        <begin position="136"/>
        <end position="169"/>
    </location>
</feature>
<gene>
    <name type="primary">PRELID1</name>
    <name type="synonym">PRELI</name>
    <name type="ORF">CGI-106</name>
    <name type="ORF">SBBI12</name>
</gene>
<accession>Q9Y255</accession>
<accession>B2R5F7</accession>
<accession>D6RD25</accession>
<accession>Q549N2</accession>
<accession>Q9UI13</accession>
<accession>Q9UJS9</accession>
<reference key="1">
    <citation type="journal article" date="2000" name="Int. Immunol.">
        <title>PRELI, the human homologue of the avian px19, is expressed by germinal center B lymphocytes.</title>
        <authorList>
            <person name="Guzman-Rojas L."/>
            <person name="Sims J.C."/>
            <person name="Rangel R."/>
            <person name="Guret C."/>
            <person name="Sun Y."/>
            <person name="Alcocer J.M."/>
            <person name="Martinez-Valdez H."/>
        </authorList>
    </citation>
    <scope>NUCLEOTIDE SEQUENCE [MRNA] (ISOFORM 1)</scope>
    <source>
        <tissue>Tonsil</tissue>
    </source>
</reference>
<reference key="2">
    <citation type="submission" date="2003-07" db="EMBL/GenBank/DDBJ databases">
        <title>Cloning of a new human cDNA homologous to chicken px19 mRNA.</title>
        <authorList>
            <person name="Zhang X.N."/>
            <person name="Yu L."/>
            <person name="Cui W.C."/>
            <person name="Zhang H.L."/>
            <person name="Xin Y.R."/>
            <person name="Zhao S.Y."/>
        </authorList>
    </citation>
    <scope>NUCLEOTIDE SEQUENCE [MRNA] (ISOFORM 1)</scope>
</reference>
<reference key="3">
    <citation type="journal article" date="2000" name="Genome Res.">
        <title>Identification of novel human genes evolutionarily conserved in Caenorhabditis elegans by comparative proteomics.</title>
        <authorList>
            <person name="Lai C.-H."/>
            <person name="Chou C.-Y."/>
            <person name="Ch'ang L.-Y."/>
            <person name="Liu C.-S."/>
            <person name="Lin W.-C."/>
        </authorList>
    </citation>
    <scope>NUCLEOTIDE SEQUENCE [LARGE SCALE MRNA] (ISOFORM 1)</scope>
</reference>
<reference key="4">
    <citation type="submission" date="1999-05" db="EMBL/GenBank/DDBJ databases">
        <title>A catalogue of genes in the human dermal papilla cells as identified by expressed sequence tags.</title>
        <authorList>
            <person name="Kim M.K."/>
            <person name="Kim Y.H."/>
            <person name="Seo J.M."/>
            <person name="Lee H.M."/>
            <person name="Chung H.J."/>
            <person name="Sohn M.Y."/>
            <person name="Hwang S.Y."/>
            <person name="Im S.U."/>
            <person name="Jung E.J."/>
            <person name="Lee J.H."/>
            <person name="Kim J.C."/>
        </authorList>
    </citation>
    <scope>NUCLEOTIDE SEQUENCE [LARGE SCALE MRNA] (ISOFORM 1)</scope>
    <source>
        <tissue>Hair follicle dermal papilla</tissue>
    </source>
</reference>
<reference key="5">
    <citation type="submission" date="1998-12" db="EMBL/GenBank/DDBJ databases">
        <authorList>
            <person name="Zhang W."/>
            <person name="He L."/>
            <person name="Wan T."/>
            <person name="Zhu X."/>
            <person name="Cao X."/>
        </authorList>
    </citation>
    <scope>NUCLEOTIDE SEQUENCE [LARGE SCALE MRNA] (ISOFORM 1)</scope>
</reference>
<reference key="6">
    <citation type="journal article" date="2000" name="Proc. Natl. Acad. Sci. U.S.A.">
        <title>Gene expression profiling in the human hypothalamus-pituitary-adrenal axis and full-length cDNA cloning.</title>
        <authorList>
            <person name="Hu R.-M."/>
            <person name="Han Z.-G."/>
            <person name="Song H.-D."/>
            <person name="Peng Y.-D."/>
            <person name="Huang Q.-H."/>
            <person name="Ren S.-X."/>
            <person name="Gu Y.-J."/>
            <person name="Huang C.-H."/>
            <person name="Li Y.-B."/>
            <person name="Jiang C.-L."/>
            <person name="Fu G."/>
            <person name="Zhang Q.-H."/>
            <person name="Gu B.-W."/>
            <person name="Dai M."/>
            <person name="Mao Y.-F."/>
            <person name="Gao G.-F."/>
            <person name="Rong R."/>
            <person name="Ye M."/>
            <person name="Zhou J."/>
            <person name="Xu S.-H."/>
            <person name="Gu J."/>
            <person name="Shi J.-X."/>
            <person name="Jin W.-R."/>
            <person name="Zhang C.-K."/>
            <person name="Wu T.-M."/>
            <person name="Huang G.-Y."/>
            <person name="Chen Z."/>
            <person name="Chen M.-D."/>
            <person name="Chen J.-L."/>
        </authorList>
    </citation>
    <scope>NUCLEOTIDE SEQUENCE [LARGE SCALE MRNA] (ISOFORM 2)</scope>
    <source>
        <tissue>Adrenal gland</tissue>
    </source>
</reference>
<reference key="7">
    <citation type="journal article" date="2004" name="Nat. Genet.">
        <title>Complete sequencing and characterization of 21,243 full-length human cDNAs.</title>
        <authorList>
            <person name="Ota T."/>
            <person name="Suzuki Y."/>
            <person name="Nishikawa T."/>
            <person name="Otsuki T."/>
            <person name="Sugiyama T."/>
            <person name="Irie R."/>
            <person name="Wakamatsu A."/>
            <person name="Hayashi K."/>
            <person name="Sato H."/>
            <person name="Nagai K."/>
            <person name="Kimura K."/>
            <person name="Makita H."/>
            <person name="Sekine M."/>
            <person name="Obayashi M."/>
            <person name="Nishi T."/>
            <person name="Shibahara T."/>
            <person name="Tanaka T."/>
            <person name="Ishii S."/>
            <person name="Yamamoto J."/>
            <person name="Saito K."/>
            <person name="Kawai Y."/>
            <person name="Isono Y."/>
            <person name="Nakamura Y."/>
            <person name="Nagahari K."/>
            <person name="Murakami K."/>
            <person name="Yasuda T."/>
            <person name="Iwayanagi T."/>
            <person name="Wagatsuma M."/>
            <person name="Shiratori A."/>
            <person name="Sudo H."/>
            <person name="Hosoiri T."/>
            <person name="Kaku Y."/>
            <person name="Kodaira H."/>
            <person name="Kondo H."/>
            <person name="Sugawara M."/>
            <person name="Takahashi M."/>
            <person name="Kanda K."/>
            <person name="Yokoi T."/>
            <person name="Furuya T."/>
            <person name="Kikkawa E."/>
            <person name="Omura Y."/>
            <person name="Abe K."/>
            <person name="Kamihara K."/>
            <person name="Katsuta N."/>
            <person name="Sato K."/>
            <person name="Tanikawa M."/>
            <person name="Yamazaki M."/>
            <person name="Ninomiya K."/>
            <person name="Ishibashi T."/>
            <person name="Yamashita H."/>
            <person name="Murakawa K."/>
            <person name="Fujimori K."/>
            <person name="Tanai H."/>
            <person name="Kimata M."/>
            <person name="Watanabe M."/>
            <person name="Hiraoka S."/>
            <person name="Chiba Y."/>
            <person name="Ishida S."/>
            <person name="Ono Y."/>
            <person name="Takiguchi S."/>
            <person name="Watanabe S."/>
            <person name="Yosida M."/>
            <person name="Hotuta T."/>
            <person name="Kusano J."/>
            <person name="Kanehori K."/>
            <person name="Takahashi-Fujii A."/>
            <person name="Hara H."/>
            <person name="Tanase T.-O."/>
            <person name="Nomura Y."/>
            <person name="Togiya S."/>
            <person name="Komai F."/>
            <person name="Hara R."/>
            <person name="Takeuchi K."/>
            <person name="Arita M."/>
            <person name="Imose N."/>
            <person name="Musashino K."/>
            <person name="Yuuki H."/>
            <person name="Oshima A."/>
            <person name="Sasaki N."/>
            <person name="Aotsuka S."/>
            <person name="Yoshikawa Y."/>
            <person name="Matsunawa H."/>
            <person name="Ichihara T."/>
            <person name="Shiohata N."/>
            <person name="Sano S."/>
            <person name="Moriya S."/>
            <person name="Momiyama H."/>
            <person name="Satoh N."/>
            <person name="Takami S."/>
            <person name="Terashima Y."/>
            <person name="Suzuki O."/>
            <person name="Nakagawa S."/>
            <person name="Senoh A."/>
            <person name="Mizoguchi H."/>
            <person name="Goto Y."/>
            <person name="Shimizu F."/>
            <person name="Wakebe H."/>
            <person name="Hishigaki H."/>
            <person name="Watanabe T."/>
            <person name="Sugiyama A."/>
            <person name="Takemoto M."/>
            <person name="Kawakami B."/>
            <person name="Yamazaki M."/>
            <person name="Watanabe K."/>
            <person name="Kumagai A."/>
            <person name="Itakura S."/>
            <person name="Fukuzumi Y."/>
            <person name="Fujimori Y."/>
            <person name="Komiyama M."/>
            <person name="Tashiro H."/>
            <person name="Tanigami A."/>
            <person name="Fujiwara T."/>
            <person name="Ono T."/>
            <person name="Yamada K."/>
            <person name="Fujii Y."/>
            <person name="Ozaki K."/>
            <person name="Hirao M."/>
            <person name="Ohmori Y."/>
            <person name="Kawabata A."/>
            <person name="Hikiji T."/>
            <person name="Kobatake N."/>
            <person name="Inagaki H."/>
            <person name="Ikema Y."/>
            <person name="Okamoto S."/>
            <person name="Okitani R."/>
            <person name="Kawakami T."/>
            <person name="Noguchi S."/>
            <person name="Itoh T."/>
            <person name="Shigeta K."/>
            <person name="Senba T."/>
            <person name="Matsumura K."/>
            <person name="Nakajima Y."/>
            <person name="Mizuno T."/>
            <person name="Morinaga M."/>
            <person name="Sasaki M."/>
            <person name="Togashi T."/>
            <person name="Oyama M."/>
            <person name="Hata H."/>
            <person name="Watanabe M."/>
            <person name="Komatsu T."/>
            <person name="Mizushima-Sugano J."/>
            <person name="Satoh T."/>
            <person name="Shirai Y."/>
            <person name="Takahashi Y."/>
            <person name="Nakagawa K."/>
            <person name="Okumura K."/>
            <person name="Nagase T."/>
            <person name="Nomura N."/>
            <person name="Kikuchi H."/>
            <person name="Masuho Y."/>
            <person name="Yamashita R."/>
            <person name="Nakai K."/>
            <person name="Yada T."/>
            <person name="Nakamura Y."/>
            <person name="Ohara O."/>
            <person name="Isogai T."/>
            <person name="Sugano S."/>
        </authorList>
    </citation>
    <scope>NUCLEOTIDE SEQUENCE [LARGE SCALE MRNA] (ISOFORM 1)</scope>
    <source>
        <tissue>Brain</tissue>
    </source>
</reference>
<reference key="8">
    <citation type="journal article" date="2004" name="Nature">
        <title>The DNA sequence and comparative analysis of human chromosome 5.</title>
        <authorList>
            <person name="Schmutz J."/>
            <person name="Martin J."/>
            <person name="Terry A."/>
            <person name="Couronne O."/>
            <person name="Grimwood J."/>
            <person name="Lowry S."/>
            <person name="Gordon L.A."/>
            <person name="Scott D."/>
            <person name="Xie G."/>
            <person name="Huang W."/>
            <person name="Hellsten U."/>
            <person name="Tran-Gyamfi M."/>
            <person name="She X."/>
            <person name="Prabhakar S."/>
            <person name="Aerts A."/>
            <person name="Altherr M."/>
            <person name="Bajorek E."/>
            <person name="Black S."/>
            <person name="Branscomb E."/>
            <person name="Caoile C."/>
            <person name="Challacombe J.F."/>
            <person name="Chan Y.M."/>
            <person name="Denys M."/>
            <person name="Detter J.C."/>
            <person name="Escobar J."/>
            <person name="Flowers D."/>
            <person name="Fotopulos D."/>
            <person name="Glavina T."/>
            <person name="Gomez M."/>
            <person name="Gonzales E."/>
            <person name="Goodstein D."/>
            <person name="Grigoriev I."/>
            <person name="Groza M."/>
            <person name="Hammon N."/>
            <person name="Hawkins T."/>
            <person name="Haydu L."/>
            <person name="Israni S."/>
            <person name="Jett J."/>
            <person name="Kadner K."/>
            <person name="Kimball H."/>
            <person name="Kobayashi A."/>
            <person name="Lopez F."/>
            <person name="Lou Y."/>
            <person name="Martinez D."/>
            <person name="Medina C."/>
            <person name="Morgan J."/>
            <person name="Nandkeshwar R."/>
            <person name="Noonan J.P."/>
            <person name="Pitluck S."/>
            <person name="Pollard M."/>
            <person name="Predki P."/>
            <person name="Priest J."/>
            <person name="Ramirez L."/>
            <person name="Retterer J."/>
            <person name="Rodriguez A."/>
            <person name="Rogers S."/>
            <person name="Salamov A."/>
            <person name="Salazar A."/>
            <person name="Thayer N."/>
            <person name="Tice H."/>
            <person name="Tsai M."/>
            <person name="Ustaszewska A."/>
            <person name="Vo N."/>
            <person name="Wheeler J."/>
            <person name="Wu K."/>
            <person name="Yang J."/>
            <person name="Dickson M."/>
            <person name="Cheng J.-F."/>
            <person name="Eichler E.E."/>
            <person name="Olsen A."/>
            <person name="Pennacchio L.A."/>
            <person name="Rokhsar D.S."/>
            <person name="Richardson P."/>
            <person name="Lucas S.M."/>
            <person name="Myers R.M."/>
            <person name="Rubin E.M."/>
        </authorList>
    </citation>
    <scope>NUCLEOTIDE SEQUENCE [LARGE SCALE GENOMIC DNA]</scope>
</reference>
<reference key="9">
    <citation type="submission" date="2005-07" db="EMBL/GenBank/DDBJ databases">
        <authorList>
            <person name="Mural R.J."/>
            <person name="Istrail S."/>
            <person name="Sutton G.G."/>
            <person name="Florea L."/>
            <person name="Halpern A.L."/>
            <person name="Mobarry C.M."/>
            <person name="Lippert R."/>
            <person name="Walenz B."/>
            <person name="Shatkay H."/>
            <person name="Dew I."/>
            <person name="Miller J.R."/>
            <person name="Flanigan M.J."/>
            <person name="Edwards N.J."/>
            <person name="Bolanos R."/>
            <person name="Fasulo D."/>
            <person name="Halldorsson B.V."/>
            <person name="Hannenhalli S."/>
            <person name="Turner R."/>
            <person name="Yooseph S."/>
            <person name="Lu F."/>
            <person name="Nusskern D.R."/>
            <person name="Shue B.C."/>
            <person name="Zheng X.H."/>
            <person name="Zhong F."/>
            <person name="Delcher A.L."/>
            <person name="Huson D.H."/>
            <person name="Kravitz S.A."/>
            <person name="Mouchard L."/>
            <person name="Reinert K."/>
            <person name="Remington K.A."/>
            <person name="Clark A.G."/>
            <person name="Waterman M.S."/>
            <person name="Eichler E.E."/>
            <person name="Adams M.D."/>
            <person name="Hunkapiller M.W."/>
            <person name="Myers E.W."/>
            <person name="Venter J.C."/>
        </authorList>
    </citation>
    <scope>NUCLEOTIDE SEQUENCE [LARGE SCALE GENOMIC DNA]</scope>
</reference>
<reference key="10">
    <citation type="journal article" date="2004" name="Genome Res.">
        <title>The status, quality, and expansion of the NIH full-length cDNA project: the Mammalian Gene Collection (MGC).</title>
        <authorList>
            <consortium name="The MGC Project Team"/>
        </authorList>
    </citation>
    <scope>NUCLEOTIDE SEQUENCE [LARGE SCALE MRNA] (ISOFORM 1)</scope>
    <source>
        <tissue>Brain</tissue>
        <tissue>Eye</tissue>
        <tissue>Ovary</tissue>
        <tissue>Placenta</tissue>
        <tissue>Uterus</tissue>
    </source>
</reference>
<reference key="11">
    <citation type="journal article" date="2004" name="Biochem. J.">
        <title>PRELI (protein of relevant evolutionary and lymphoid interest) is located within an evolutionarily conserved gene cluster on chromosome 5q34-q35 and encodes a novel mitochondrial protein.</title>
        <authorList>
            <person name="Fox E.J."/>
            <person name="Stubbs S.A."/>
            <person name="Kyaw Tun J."/>
            <person name="Leek J.P."/>
            <person name="Markham A.F."/>
            <person name="Wright S.C."/>
        </authorList>
    </citation>
    <scope>SUBCELLULAR LOCATION</scope>
    <scope>PRESENCE OF N-TERMINAL TRANSIT PEPTIDE</scope>
</reference>
<reference key="12">
    <citation type="journal article" date="2009" name="Blood">
        <title>PRELI is a mitochondrial regulator of human primary T-helper cell apoptosis, STAT6, and Th2-cell differentiation.</title>
        <authorList>
            <person name="Tahvanainen J."/>
            <person name="Kallonen T."/>
            <person name="Lahteenmaki H."/>
            <person name="Heiskanen K.M."/>
            <person name="Westermarck J."/>
            <person name="Rao K.V."/>
            <person name="Lahesmaa R."/>
        </authorList>
    </citation>
    <scope>FUNCTION</scope>
    <scope>SUBCELLULAR LOCATION</scope>
    <scope>INDUCTION</scope>
</reference>
<reference key="13">
    <citation type="journal article" date="2010" name="Cell Death Dis.">
        <title>Vital function of PRELI and essential requirement of its LEA motif.</title>
        <authorList>
            <person name="McKeller M.R."/>
            <person name="Herrera-Rodriguez S."/>
            <person name="Ma W."/>
            <person name="Ortiz-Quintero B."/>
            <person name="Rangel R."/>
            <person name="Cande C."/>
            <person name="Sims-Mourtada J.C."/>
            <person name="Melnikova V."/>
            <person name="Kashi C."/>
            <person name="Phan L.M."/>
            <person name="Chen Z."/>
            <person name="Huang P."/>
            <person name="Dunner K. Jr."/>
            <person name="Kroemer G."/>
            <person name="Singh K.K."/>
            <person name="Martinez-Valdez H."/>
        </authorList>
    </citation>
    <scope>FUNCTION</scope>
    <scope>SUBCELLULAR LOCATION</scope>
    <scope>INTERACTION WITH OPA1 AND AIFM1</scope>
</reference>
<reference key="14">
    <citation type="journal article" date="2012" name="Proc. Natl. Acad. Sci. U.S.A.">
        <title>N-terminal acetylome analyses and functional insights of the N-terminal acetyltransferase NatB.</title>
        <authorList>
            <person name="Van Damme P."/>
            <person name="Lasa M."/>
            <person name="Polevoda B."/>
            <person name="Gazquez C."/>
            <person name="Elosegui-Artola A."/>
            <person name="Kim D.S."/>
            <person name="De Juan-Pardo E."/>
            <person name="Demeyer K."/>
            <person name="Hole K."/>
            <person name="Larrea E."/>
            <person name="Timmerman E."/>
            <person name="Prieto J."/>
            <person name="Arnesen T."/>
            <person name="Sherman F."/>
            <person name="Gevaert K."/>
            <person name="Aldabe R."/>
        </authorList>
    </citation>
    <scope>IDENTIFICATION BY MASS SPECTROMETRY [LARGE SCALE ANALYSIS]</scope>
</reference>
<reference key="15">
    <citation type="journal article" date="2013" name="Cell Metab.">
        <title>TRIAP1/PRELI complexes prevent apoptosis by mediating intramitochondrial transport of phosphatidic acid.</title>
        <authorList>
            <person name="Potting C."/>
            <person name="Tatsuta T."/>
            <person name="Konig T."/>
            <person name="Haag M."/>
            <person name="Wai T."/>
            <person name="Aaltonen M.J."/>
            <person name="Langer T."/>
        </authorList>
    </citation>
    <scope>FUNCTION</scope>
    <scope>CATALYTIC ACTIVITY</scope>
    <scope>SUBUNIT</scope>
    <scope>SUBCELLULAR LOCATION</scope>
</reference>
<dbReference type="EMBL" id="AF201925">
    <property type="protein sequence ID" value="AAF09255.1"/>
    <property type="molecule type" value="mRNA"/>
</dbReference>
<dbReference type="EMBL" id="AF087858">
    <property type="protein sequence ID" value="AAP97168.1"/>
    <property type="molecule type" value="mRNA"/>
</dbReference>
<dbReference type="EMBL" id="AF151864">
    <property type="protein sequence ID" value="AAD34101.1"/>
    <property type="molecule type" value="mRNA"/>
</dbReference>
<dbReference type="EMBL" id="AF153607">
    <property type="protein sequence ID" value="AAD41089.1"/>
    <property type="molecule type" value="mRNA"/>
</dbReference>
<dbReference type="EMBL" id="AF111112">
    <property type="protein sequence ID" value="AAF27195.1"/>
    <property type="molecule type" value="mRNA"/>
</dbReference>
<dbReference type="EMBL" id="AF112203">
    <property type="protein sequence ID" value="AAF17191.1"/>
    <property type="molecule type" value="mRNA"/>
</dbReference>
<dbReference type="EMBL" id="AK312170">
    <property type="protein sequence ID" value="BAG35104.1"/>
    <property type="molecule type" value="mRNA"/>
</dbReference>
<dbReference type="EMBL" id="AC146507">
    <property type="status" value="NOT_ANNOTATED_CDS"/>
    <property type="molecule type" value="Genomic_DNA"/>
</dbReference>
<dbReference type="EMBL" id="CH471195">
    <property type="protein sequence ID" value="EAW85022.1"/>
    <property type="molecule type" value="Genomic_DNA"/>
</dbReference>
<dbReference type="EMBL" id="CH471195">
    <property type="protein sequence ID" value="EAW85023.1"/>
    <property type="molecule type" value="Genomic_DNA"/>
</dbReference>
<dbReference type="EMBL" id="BC000007">
    <property type="protein sequence ID" value="AAH00007.1"/>
    <property type="molecule type" value="mRNA"/>
</dbReference>
<dbReference type="EMBL" id="BC007268">
    <property type="protein sequence ID" value="AAH07268.1"/>
    <property type="molecule type" value="mRNA"/>
</dbReference>
<dbReference type="EMBL" id="BC008307">
    <property type="protein sequence ID" value="AAH08307.1"/>
    <property type="molecule type" value="mRNA"/>
</dbReference>
<dbReference type="EMBL" id="BC008866">
    <property type="protein sequence ID" value="AAH08866.1"/>
    <property type="molecule type" value="mRNA"/>
</dbReference>
<dbReference type="EMBL" id="BC013733">
    <property type="protein sequence ID" value="AAH13733.1"/>
    <property type="molecule type" value="mRNA"/>
</dbReference>
<dbReference type="EMBL" id="BC013748">
    <property type="protein sequence ID" value="AAH13748.1"/>
    <property type="molecule type" value="mRNA"/>
</dbReference>
<dbReference type="EMBL" id="BC078182">
    <property type="protein sequence ID" value="AAH78182.1"/>
    <property type="molecule type" value="mRNA"/>
</dbReference>
<dbReference type="CCDS" id="CCDS4415.1">
    <molecule id="Q9Y255-1"/>
</dbReference>
<dbReference type="CCDS" id="CCDS64328.1">
    <molecule id="Q9Y255-2"/>
</dbReference>
<dbReference type="RefSeq" id="NP_001258757.1">
    <molecule id="Q9Y255-2"/>
    <property type="nucleotide sequence ID" value="NM_001271828.2"/>
</dbReference>
<dbReference type="RefSeq" id="NP_037369.1">
    <molecule id="Q9Y255-1"/>
    <property type="nucleotide sequence ID" value="NM_013237.4"/>
</dbReference>
<dbReference type="PDB" id="6I3V">
    <property type="method" value="X-ray"/>
    <property type="resolution" value="1.98 A"/>
    <property type="chains" value="B/F=1-173"/>
</dbReference>
<dbReference type="PDB" id="6I3Y">
    <property type="method" value="X-ray"/>
    <property type="resolution" value="2.98 A"/>
    <property type="chains" value="C/F=1-173"/>
</dbReference>
<dbReference type="PDBsum" id="6I3V"/>
<dbReference type="PDBsum" id="6I3Y"/>
<dbReference type="SMR" id="Q9Y255"/>
<dbReference type="BioGRID" id="118045">
    <property type="interactions" value="40"/>
</dbReference>
<dbReference type="FunCoup" id="Q9Y255">
    <property type="interactions" value="1876"/>
</dbReference>
<dbReference type="IntAct" id="Q9Y255">
    <property type="interactions" value="25"/>
</dbReference>
<dbReference type="STRING" id="9606.ENSP00000302114"/>
<dbReference type="GlyGen" id="Q9Y255">
    <property type="glycosylation" value="1 site, 1 O-linked glycan (1 site)"/>
</dbReference>
<dbReference type="iPTMnet" id="Q9Y255"/>
<dbReference type="PhosphoSitePlus" id="Q9Y255"/>
<dbReference type="BioMuta" id="PRELID1"/>
<dbReference type="DMDM" id="29839690"/>
<dbReference type="jPOST" id="Q9Y255"/>
<dbReference type="MassIVE" id="Q9Y255"/>
<dbReference type="PaxDb" id="9606-ENSP00000302114"/>
<dbReference type="PeptideAtlas" id="Q9Y255"/>
<dbReference type="ProteomicsDB" id="14004"/>
<dbReference type="ProteomicsDB" id="85657">
    <molecule id="Q9Y255-1"/>
</dbReference>
<dbReference type="Pumba" id="Q9Y255"/>
<dbReference type="Antibodypedia" id="1204">
    <property type="antibodies" value="168 antibodies from 23 providers"/>
</dbReference>
<dbReference type="DNASU" id="27166"/>
<dbReference type="Ensembl" id="ENST00000303204.9">
    <molecule id="Q9Y255-1"/>
    <property type="protein sequence ID" value="ENSP00000302114.4"/>
    <property type="gene ID" value="ENSG00000169230.10"/>
</dbReference>
<dbReference type="Ensembl" id="ENST00000503216.5">
    <molecule id="Q9Y255-2"/>
    <property type="protein sequence ID" value="ENSP00000427097.1"/>
    <property type="gene ID" value="ENSG00000169230.10"/>
</dbReference>
<dbReference type="GeneID" id="27166"/>
<dbReference type="KEGG" id="hsa:27166"/>
<dbReference type="MANE-Select" id="ENST00000303204.9">
    <property type="protein sequence ID" value="ENSP00000302114.4"/>
    <property type="RefSeq nucleotide sequence ID" value="NM_013237.4"/>
    <property type="RefSeq protein sequence ID" value="NP_037369.1"/>
</dbReference>
<dbReference type="UCSC" id="uc003mfx.5">
    <molecule id="Q9Y255-1"/>
    <property type="organism name" value="human"/>
</dbReference>
<dbReference type="AGR" id="HGNC:30255"/>
<dbReference type="CTD" id="27166"/>
<dbReference type="DisGeNET" id="27166"/>
<dbReference type="GeneCards" id="PRELID1"/>
<dbReference type="HGNC" id="HGNC:30255">
    <property type="gene designation" value="PRELID1"/>
</dbReference>
<dbReference type="HPA" id="ENSG00000169230">
    <property type="expression patterns" value="Low tissue specificity"/>
</dbReference>
<dbReference type="MIM" id="605733">
    <property type="type" value="gene"/>
</dbReference>
<dbReference type="neXtProt" id="NX_Q9Y255"/>
<dbReference type="OpenTargets" id="ENSG00000169230"/>
<dbReference type="PharmGKB" id="PA162400040"/>
<dbReference type="VEuPathDB" id="HostDB:ENSG00000169230"/>
<dbReference type="eggNOG" id="KOG3337">
    <property type="taxonomic scope" value="Eukaryota"/>
</dbReference>
<dbReference type="GeneTree" id="ENSGT00950000182810"/>
<dbReference type="HOGENOM" id="CLU_067902_3_0_1"/>
<dbReference type="InParanoid" id="Q9Y255"/>
<dbReference type="OMA" id="GYEFFKC"/>
<dbReference type="OrthoDB" id="341300at2759"/>
<dbReference type="PAN-GO" id="Q9Y255">
    <property type="GO annotations" value="2 GO annotations based on evolutionary models"/>
</dbReference>
<dbReference type="PhylomeDB" id="Q9Y255"/>
<dbReference type="TreeFam" id="TF313119"/>
<dbReference type="PathwayCommons" id="Q9Y255"/>
<dbReference type="Reactome" id="R-HSA-6803204">
    <property type="pathway name" value="TP53 Regulates Transcription of Genes Involved in Cytochrome C Release"/>
</dbReference>
<dbReference type="Reactome" id="R-HSA-9837999">
    <property type="pathway name" value="Mitochondrial protein degradation"/>
</dbReference>
<dbReference type="SignaLink" id="Q9Y255"/>
<dbReference type="BioGRID-ORCS" id="27166">
    <property type="hits" value="812 hits in 1167 CRISPR screens"/>
</dbReference>
<dbReference type="ChiTaRS" id="PRELID1">
    <property type="organism name" value="human"/>
</dbReference>
<dbReference type="GenomeRNAi" id="27166"/>
<dbReference type="Pharos" id="Q9Y255">
    <property type="development level" value="Tbio"/>
</dbReference>
<dbReference type="PRO" id="PR:Q9Y255"/>
<dbReference type="Proteomes" id="UP000005640">
    <property type="component" value="Chromosome 5"/>
</dbReference>
<dbReference type="RNAct" id="Q9Y255">
    <property type="molecule type" value="protein"/>
</dbReference>
<dbReference type="Bgee" id="ENSG00000169230">
    <property type="expression patterns" value="Expressed in body of pancreas and 163 other cell types or tissues"/>
</dbReference>
<dbReference type="ExpressionAtlas" id="Q9Y255">
    <property type="expression patterns" value="baseline and differential"/>
</dbReference>
<dbReference type="GO" id="GO:0005758">
    <property type="term" value="C:mitochondrial intermembrane space"/>
    <property type="evidence" value="ECO:0000314"/>
    <property type="project" value="UniProtKB"/>
</dbReference>
<dbReference type="GO" id="GO:0005739">
    <property type="term" value="C:mitochondrion"/>
    <property type="evidence" value="ECO:0000314"/>
    <property type="project" value="HPA"/>
</dbReference>
<dbReference type="GO" id="GO:0005654">
    <property type="term" value="C:nucleoplasm"/>
    <property type="evidence" value="ECO:0000314"/>
    <property type="project" value="HPA"/>
</dbReference>
<dbReference type="GO" id="GO:0032991">
    <property type="term" value="C:protein-containing complex"/>
    <property type="evidence" value="ECO:0000314"/>
    <property type="project" value="UniProtKB"/>
</dbReference>
<dbReference type="GO" id="GO:0006915">
    <property type="term" value="P:apoptotic process"/>
    <property type="evidence" value="ECO:0007669"/>
    <property type="project" value="UniProtKB-KW"/>
</dbReference>
<dbReference type="GO" id="GO:0120009">
    <property type="term" value="P:intermembrane lipid transfer"/>
    <property type="evidence" value="ECO:0007669"/>
    <property type="project" value="GOC"/>
</dbReference>
<dbReference type="GO" id="GO:0043066">
    <property type="term" value="P:negative regulation of apoptotic process"/>
    <property type="evidence" value="ECO:0000314"/>
    <property type="project" value="UniProtKB"/>
</dbReference>
<dbReference type="GO" id="GO:0010917">
    <property type="term" value="P:negative regulation of mitochondrial membrane potential"/>
    <property type="evidence" value="ECO:0000314"/>
    <property type="project" value="UniProtKB"/>
</dbReference>
<dbReference type="GO" id="GO:0090201">
    <property type="term" value="P:negative regulation of release of cytochrome c from mitochondria"/>
    <property type="evidence" value="ECO:0000314"/>
    <property type="project" value="UniProtKB"/>
</dbReference>
<dbReference type="GO" id="GO:0015914">
    <property type="term" value="P:phospholipid transport"/>
    <property type="evidence" value="ECO:0000318"/>
    <property type="project" value="GO_Central"/>
</dbReference>
<dbReference type="GO" id="GO:1901857">
    <property type="term" value="P:positive regulation of cellular respiration"/>
    <property type="evidence" value="ECO:0000314"/>
    <property type="project" value="UniProtKB"/>
</dbReference>
<dbReference type="GO" id="GO:0010950">
    <property type="term" value="P:positive regulation of endopeptidase activity"/>
    <property type="evidence" value="ECO:0000314"/>
    <property type="project" value="UniProtKB"/>
</dbReference>
<dbReference type="GO" id="GO:2001140">
    <property type="term" value="P:positive regulation of phospholipid transport"/>
    <property type="evidence" value="ECO:0000314"/>
    <property type="project" value="UniProtKB"/>
</dbReference>
<dbReference type="GO" id="GO:0070234">
    <property type="term" value="P:positive regulation of T cell apoptotic process"/>
    <property type="evidence" value="ECO:0000314"/>
    <property type="project" value="UniProtKB"/>
</dbReference>
<dbReference type="GO" id="GO:0097035">
    <property type="term" value="P:regulation of membrane lipid distribution"/>
    <property type="evidence" value="ECO:0000314"/>
    <property type="project" value="UniProtKB"/>
</dbReference>
<dbReference type="GO" id="GO:0051881">
    <property type="term" value="P:regulation of mitochondrial membrane potential"/>
    <property type="evidence" value="ECO:0000314"/>
    <property type="project" value="UniProtKB"/>
</dbReference>
<dbReference type="GO" id="GO:0045580">
    <property type="term" value="P:regulation of T cell differentiation"/>
    <property type="evidence" value="ECO:0000314"/>
    <property type="project" value="UniProtKB"/>
</dbReference>
<dbReference type="InterPro" id="IPR006797">
    <property type="entry name" value="PRELI/MSF1_dom"/>
</dbReference>
<dbReference type="InterPro" id="IPR037365">
    <property type="entry name" value="Slowmo/Ups"/>
</dbReference>
<dbReference type="PANTHER" id="PTHR11158">
    <property type="entry name" value="MSF1/PX19 RELATED"/>
    <property type="match status" value="1"/>
</dbReference>
<dbReference type="Pfam" id="PF04707">
    <property type="entry name" value="PRELI"/>
    <property type="match status" value="1"/>
</dbReference>
<dbReference type="PROSITE" id="PS50904">
    <property type="entry name" value="PRELI_MSF1"/>
    <property type="match status" value="1"/>
</dbReference>
<organism>
    <name type="scientific">Homo sapiens</name>
    <name type="common">Human</name>
    <dbReference type="NCBI Taxonomy" id="9606"/>
    <lineage>
        <taxon>Eukaryota</taxon>
        <taxon>Metazoa</taxon>
        <taxon>Chordata</taxon>
        <taxon>Craniata</taxon>
        <taxon>Vertebrata</taxon>
        <taxon>Euteleostomi</taxon>
        <taxon>Mammalia</taxon>
        <taxon>Eutheria</taxon>
        <taxon>Euarchontoglires</taxon>
        <taxon>Primates</taxon>
        <taxon>Haplorrhini</taxon>
        <taxon>Catarrhini</taxon>
        <taxon>Hominidae</taxon>
        <taxon>Homo</taxon>
    </lineage>
</organism>
<comment type="function">
    <text evidence="3 4 5">Involved in the modulation of the mitochondrial apoptotic pathway by ensuring the accumulation of cardiolipin (CL) in mitochondrial membranes. In vitro, the TRIAP1:PRELID1 complex mediates the transfer of phosphatidic acid (PA) between liposomes and probably functions as a PA transporter across the mitochondrion intermembrane space to provide PA for CL synthesis in the inner membrane. Regulates the mitochondrial apoptotic pathway in primary Th cells. Regulates Th cell differentiation by down-regulating STAT6 thereby reducing IL-4-induced Th2 cell number. May be important for the development of vital and immunocompetent organs.</text>
</comment>
<comment type="catalytic activity">
    <reaction evidence="5">
        <text>a 1,2-diacyl-sn-glycero-3-phosphate(in) = a 1,2-diacyl-sn-glycero-3-phosphate(out)</text>
        <dbReference type="Rhea" id="RHEA:36435"/>
        <dbReference type="ChEBI" id="CHEBI:58608"/>
    </reaction>
</comment>
<comment type="subunit">
    <text evidence="4 5">Forms a complex with TRIAP1 in the mitochondrion intermembrane space. Interacts with OPA1 and AIFM1.</text>
</comment>
<comment type="subcellular location">
    <subcellularLocation>
        <location>Mitochondrion</location>
    </subcellularLocation>
    <subcellularLocation>
        <location evidence="2 3 4 5">Mitochondrion intermembrane space</location>
    </subcellularLocation>
</comment>
<comment type="alternative products">
    <event type="alternative splicing"/>
    <isoform>
        <id>Q9Y255-1</id>
        <name>1</name>
        <sequence type="displayed"/>
    </isoform>
    <isoform>
        <id>Q9Y255-2</id>
        <name>2</name>
        <sequence type="described" ref="VSP_054731"/>
    </isoform>
</comment>
<comment type="tissue specificity">
    <text>Highly expressed in fetal liver; less expressed in fetal brain, lung, and kidney. At the adult stage, expression is drastically reduced in the liver but highly expressed in the spleen, brain, lung, lymph nodes and peripheral blood leukocytes.</text>
</comment>
<comment type="induction">
    <text evidence="3">Up-regulated in response to activation in primary T helper cells.</text>
</comment>
<protein>
    <recommendedName>
        <fullName>PRELI domain-containing protein 1, mitochondrial</fullName>
    </recommendedName>
    <alternativeName>
        <fullName>25 kDa protein of relevant evolutionary and lymphoid interest</fullName>
    </alternativeName>
    <alternativeName>
        <fullName>Px19-like protein</fullName>
    </alternativeName>
</protein>
<proteinExistence type="evidence at protein level"/>